<proteinExistence type="inferred from homology"/>
<reference key="1">
    <citation type="journal article" date="2000" name="DNA Res.">
        <title>Complete genome structure of the nitrogen-fixing symbiotic bacterium Mesorhizobium loti.</title>
        <authorList>
            <person name="Kaneko T."/>
            <person name="Nakamura Y."/>
            <person name="Sato S."/>
            <person name="Asamizu E."/>
            <person name="Kato T."/>
            <person name="Sasamoto S."/>
            <person name="Watanabe A."/>
            <person name="Idesawa K."/>
            <person name="Ishikawa A."/>
            <person name="Kawashima K."/>
            <person name="Kimura T."/>
            <person name="Kishida Y."/>
            <person name="Kiyokawa C."/>
            <person name="Kohara M."/>
            <person name="Matsumoto M."/>
            <person name="Matsuno A."/>
            <person name="Mochizuki Y."/>
            <person name="Nakayama S."/>
            <person name="Nakazaki N."/>
            <person name="Shimpo S."/>
            <person name="Sugimoto M."/>
            <person name="Takeuchi C."/>
            <person name="Yamada M."/>
            <person name="Tabata S."/>
        </authorList>
    </citation>
    <scope>NUCLEOTIDE SEQUENCE [LARGE SCALE GENOMIC DNA]</scope>
    <source>
        <strain>LMG 29417 / CECT 9101 / MAFF 303099</strain>
    </source>
</reference>
<evidence type="ECO:0000250" key="1"/>
<evidence type="ECO:0000255" key="2"/>
<evidence type="ECO:0000305" key="3"/>
<organism>
    <name type="scientific">Mesorhizobium japonicum (strain LMG 29417 / CECT 9101 / MAFF 303099)</name>
    <name type="common">Mesorhizobium loti (strain MAFF 303099)</name>
    <dbReference type="NCBI Taxonomy" id="266835"/>
    <lineage>
        <taxon>Bacteria</taxon>
        <taxon>Pseudomonadati</taxon>
        <taxon>Pseudomonadota</taxon>
        <taxon>Alphaproteobacteria</taxon>
        <taxon>Hyphomicrobiales</taxon>
        <taxon>Phyllobacteriaceae</taxon>
        <taxon>Mesorhizobium</taxon>
    </lineage>
</organism>
<feature type="chain" id="PRO_0000202108" description="C4-dicarboxylate transport protein 2">
    <location>
        <begin position="1"/>
        <end position="442"/>
    </location>
</feature>
<feature type="transmembrane region" description="Helical" evidence="2">
    <location>
        <begin position="20"/>
        <end position="39"/>
    </location>
</feature>
<feature type="transmembrane region" description="Helical" evidence="2">
    <location>
        <begin position="52"/>
        <end position="74"/>
    </location>
</feature>
<feature type="transmembrane region" description="Helical" evidence="2">
    <location>
        <begin position="89"/>
        <end position="111"/>
    </location>
</feature>
<feature type="transmembrane region" description="Helical" evidence="2">
    <location>
        <begin position="141"/>
        <end position="158"/>
    </location>
</feature>
<feature type="transmembrane region" description="Helical" evidence="2">
    <location>
        <begin position="162"/>
        <end position="179"/>
    </location>
</feature>
<feature type="transmembrane region" description="Helical" evidence="2">
    <location>
        <begin position="200"/>
        <end position="221"/>
    </location>
</feature>
<feature type="transmembrane region" description="Helical" evidence="2">
    <location>
        <begin position="231"/>
        <end position="253"/>
    </location>
</feature>
<feature type="transmembrane region" description="Helical" evidence="2">
    <location>
        <begin position="342"/>
        <end position="364"/>
    </location>
</feature>
<feature type="transmembrane region" description="Helical" evidence="2">
    <location>
        <begin position="368"/>
        <end position="387"/>
    </location>
</feature>
<keyword id="KW-0997">Cell inner membrane</keyword>
<keyword id="KW-1003">Cell membrane</keyword>
<keyword id="KW-0472">Membrane</keyword>
<keyword id="KW-0769">Symport</keyword>
<keyword id="KW-0812">Transmembrane</keyword>
<keyword id="KW-1133">Transmembrane helix</keyword>
<keyword id="KW-0813">Transport</keyword>
<dbReference type="EMBL" id="BA000012">
    <property type="protein sequence ID" value="BAB53385.1"/>
    <property type="molecule type" value="Genomic_DNA"/>
</dbReference>
<dbReference type="RefSeq" id="WP_010914692.1">
    <property type="nucleotide sequence ID" value="NC_002678.2"/>
</dbReference>
<dbReference type="SMR" id="Q986R8"/>
<dbReference type="KEGG" id="mlo:mll7237"/>
<dbReference type="PATRIC" id="fig|266835.9.peg.5780"/>
<dbReference type="eggNOG" id="COG1301">
    <property type="taxonomic scope" value="Bacteria"/>
</dbReference>
<dbReference type="HOGENOM" id="CLU_019375_7_0_5"/>
<dbReference type="Proteomes" id="UP000000552">
    <property type="component" value="Chromosome"/>
</dbReference>
<dbReference type="GO" id="GO:0005886">
    <property type="term" value="C:plasma membrane"/>
    <property type="evidence" value="ECO:0007669"/>
    <property type="project" value="UniProtKB-SubCell"/>
</dbReference>
<dbReference type="GO" id="GO:0015138">
    <property type="term" value="F:fumarate transmembrane transporter activity"/>
    <property type="evidence" value="ECO:0007669"/>
    <property type="project" value="TreeGrafter"/>
</dbReference>
<dbReference type="GO" id="GO:0015366">
    <property type="term" value="F:malate:proton symporter activity"/>
    <property type="evidence" value="ECO:0007669"/>
    <property type="project" value="TreeGrafter"/>
</dbReference>
<dbReference type="GO" id="GO:0015141">
    <property type="term" value="F:succinate transmembrane transporter activity"/>
    <property type="evidence" value="ECO:0007669"/>
    <property type="project" value="TreeGrafter"/>
</dbReference>
<dbReference type="GO" id="GO:0070778">
    <property type="term" value="P:L-aspartate transmembrane transport"/>
    <property type="evidence" value="ECO:0007669"/>
    <property type="project" value="TreeGrafter"/>
</dbReference>
<dbReference type="FunFam" id="1.10.3860.10:FF:000001">
    <property type="entry name" value="C4-dicarboxylate transport protein"/>
    <property type="match status" value="1"/>
</dbReference>
<dbReference type="Gene3D" id="1.10.3860.10">
    <property type="entry name" value="Sodium:dicarboxylate symporter"/>
    <property type="match status" value="1"/>
</dbReference>
<dbReference type="HAMAP" id="MF_01300">
    <property type="entry name" value="C4_dicarb_transport"/>
    <property type="match status" value="1"/>
</dbReference>
<dbReference type="InterPro" id="IPR023954">
    <property type="entry name" value="C4_dicarb_transport"/>
</dbReference>
<dbReference type="InterPro" id="IPR001991">
    <property type="entry name" value="Na-dicarboxylate_symporter"/>
</dbReference>
<dbReference type="InterPro" id="IPR018107">
    <property type="entry name" value="Na-dicarboxylate_symporter_CS"/>
</dbReference>
<dbReference type="InterPro" id="IPR036458">
    <property type="entry name" value="Na:dicarbo_symporter_sf"/>
</dbReference>
<dbReference type="NCBIfam" id="NF002461">
    <property type="entry name" value="PRK01663.1"/>
    <property type="match status" value="1"/>
</dbReference>
<dbReference type="NCBIfam" id="NF009587">
    <property type="entry name" value="PRK13027.1"/>
    <property type="match status" value="1"/>
</dbReference>
<dbReference type="PANTHER" id="PTHR42865:SF1">
    <property type="entry name" value="AEROBIC C4-DICARBOXYLATE TRANSPORT PROTEIN"/>
    <property type="match status" value="1"/>
</dbReference>
<dbReference type="PANTHER" id="PTHR42865">
    <property type="entry name" value="PROTON/GLUTAMATE-ASPARTATE SYMPORTER"/>
    <property type="match status" value="1"/>
</dbReference>
<dbReference type="Pfam" id="PF00375">
    <property type="entry name" value="SDF"/>
    <property type="match status" value="1"/>
</dbReference>
<dbReference type="PRINTS" id="PR00173">
    <property type="entry name" value="EDTRNSPORT"/>
</dbReference>
<dbReference type="SUPFAM" id="SSF118215">
    <property type="entry name" value="Proton glutamate symport protein"/>
    <property type="match status" value="1"/>
</dbReference>
<dbReference type="PROSITE" id="PS00713">
    <property type="entry name" value="NA_DICARBOXYL_SYMP_1"/>
    <property type="match status" value="1"/>
</dbReference>
<dbReference type="PROSITE" id="PS00714">
    <property type="entry name" value="NA_DICARBOXYL_SYMP_2"/>
    <property type="match status" value="1"/>
</dbReference>
<sequence length="442" mass="46095">MHIADQSGAAAAQRKPLYAQLYVQVLVAITVGILLGHYYPSIGESMKPLGDAFIKLVKMIIAPVIFLTVATGIAGMSDLQKVGRVAGKAMLYFLTFSTLALIIGLVVANVVQPGAGFNIDPATLDASTVNTYAAKAHDQSVTGFLMNIIPGTIVGAFADGDILQVLFFSVLFGIALALVGDKGAPVLNFLQALMAPMFKLVSVLMKAAPIGAFGAMAFTIGKYGIGSVINLAMLVGTFYATSLLFVFVVLGAVCRYNGFSILSLLRYIKEELLLVLGTSSSEAALPSLMEKMEKAGAKRSVVGLVIPTGYSFNLDGTNIYMTLAALFIAQATNIHLSMGDQILLLLVAMLSSKGAAGITGAGFITLAATLSVVPSVPVAGMALILGVDRFMSECRALTNFIGNAVATLVVARWEGELDEAKLARALAGTADDSLPADIVPAE</sequence>
<protein>
    <recommendedName>
        <fullName>C4-dicarboxylate transport protein 2</fullName>
    </recommendedName>
</protein>
<name>DCTA2_RHILO</name>
<comment type="function">
    <text evidence="1">Responsible for the transport of dicarboxylates such as succinate, fumarate, and malate from the periplasm across the membrane. This transport system plays an important role in the energy supply of rhizobium-legume symbionts (By similarity).</text>
</comment>
<comment type="subcellular location">
    <subcellularLocation>
        <location evidence="1">Cell inner membrane</location>
        <topology evidence="1">Multi-pass membrane protein</topology>
    </subcellularLocation>
</comment>
<comment type="similarity">
    <text evidence="3">Belongs to the dicarboxylate/amino acid:cation symporter (DAACS) (TC 2.A.23) family.</text>
</comment>
<gene>
    <name type="primary">dctA2</name>
    <name type="ordered locus">mll7237</name>
</gene>
<accession>Q986R8</accession>